<feature type="initiator methionine" description="Removed" evidence="1">
    <location>
        <position position="1"/>
    </location>
</feature>
<feature type="chain" id="PRO_0000460087" description="Small ribosomal subunit protein uS14">
    <location>
        <begin position="2"/>
        <end position="56"/>
    </location>
</feature>
<feature type="binding site" evidence="5 21 22">
    <location>
        <position position="21"/>
    </location>
    <ligand>
        <name>Zn(2+)</name>
        <dbReference type="ChEBI" id="CHEBI:29105"/>
    </ligand>
</feature>
<feature type="binding site" evidence="5 21 22">
    <location>
        <position position="24"/>
    </location>
    <ligand>
        <name>Zn(2+)</name>
        <dbReference type="ChEBI" id="CHEBI:29105"/>
    </ligand>
</feature>
<feature type="binding site" evidence="5 21 22">
    <location>
        <position position="39"/>
    </location>
    <ligand>
        <name>Zn(2+)</name>
        <dbReference type="ChEBI" id="CHEBI:29105"/>
    </ligand>
</feature>
<feature type="binding site" evidence="5 21 22">
    <location>
        <position position="42"/>
    </location>
    <ligand>
        <name>Zn(2+)</name>
        <dbReference type="ChEBI" id="CHEBI:29105"/>
    </ligand>
</feature>
<feature type="modified residue" description="Phosphoserine" evidence="1">
    <location>
        <position position="9"/>
    </location>
</feature>
<feature type="modified residue" description="Omega-N-methylarginine" evidence="1">
    <location>
        <position position="12"/>
    </location>
</feature>
<feature type="modified residue" description="N6-acetyllysine" evidence="1">
    <location>
        <position position="48"/>
    </location>
</feature>
<feature type="helix" evidence="49">
    <location>
        <begin position="3"/>
        <end position="6"/>
    </location>
</feature>
<feature type="strand" evidence="50">
    <location>
        <begin position="13"/>
        <end position="18"/>
    </location>
</feature>
<feature type="turn" evidence="50">
    <location>
        <begin position="22"/>
        <end position="25"/>
    </location>
</feature>
<feature type="strand" evidence="51">
    <location>
        <begin position="28"/>
        <end position="31"/>
    </location>
</feature>
<feature type="helix" evidence="51">
    <location>
        <begin position="33"/>
        <end position="35"/>
    </location>
</feature>
<feature type="helix" evidence="50">
    <location>
        <begin position="40"/>
        <end position="43"/>
    </location>
</feature>
<feature type="turn" evidence="50">
    <location>
        <begin position="44"/>
        <end position="46"/>
    </location>
</feature>
<feature type="strand" evidence="50">
    <location>
        <begin position="47"/>
        <end position="49"/>
    </location>
</feature>
<dbReference type="EMBL" id="AAGW02050031">
    <property type="status" value="NOT_ANNOTATED_CDS"/>
    <property type="molecule type" value="Genomic_DNA"/>
</dbReference>
<dbReference type="RefSeq" id="NP_001276741.1">
    <property type="nucleotide sequence ID" value="NM_001289812.1"/>
</dbReference>
<dbReference type="RefSeq" id="XP_002710749.1">
    <property type="nucleotide sequence ID" value="XM_002710703.3"/>
</dbReference>
<dbReference type="PDB" id="3JAG">
    <property type="method" value="EM"/>
    <property type="resolution" value="3.65 A"/>
    <property type="chains" value="dd=4-56"/>
</dbReference>
<dbReference type="PDB" id="3JAH">
    <property type="method" value="EM"/>
    <property type="resolution" value="3.45 A"/>
    <property type="chains" value="dd=4-56"/>
</dbReference>
<dbReference type="PDB" id="3JAI">
    <property type="method" value="EM"/>
    <property type="resolution" value="3.65 A"/>
    <property type="chains" value="dd=4-56"/>
</dbReference>
<dbReference type="PDB" id="4D5L">
    <property type="method" value="EM"/>
    <property type="resolution" value="9.00 A"/>
    <property type="chains" value="d=1-56"/>
</dbReference>
<dbReference type="PDB" id="4D61">
    <property type="method" value="EM"/>
    <property type="resolution" value="9.00 A"/>
    <property type="chains" value="d=1-56"/>
</dbReference>
<dbReference type="PDB" id="4KZX">
    <property type="method" value="X-ray"/>
    <property type="resolution" value="7.81 A"/>
    <property type="chains" value="d=1-56"/>
</dbReference>
<dbReference type="PDB" id="4KZY">
    <property type="method" value="X-ray"/>
    <property type="resolution" value="7.01 A"/>
    <property type="chains" value="d=1-56"/>
</dbReference>
<dbReference type="PDB" id="4KZZ">
    <property type="method" value="X-ray"/>
    <property type="resolution" value="7.03 A"/>
    <property type="chains" value="d=1-56"/>
</dbReference>
<dbReference type="PDB" id="5K0Y">
    <property type="method" value="EM"/>
    <property type="resolution" value="5.80 A"/>
    <property type="chains" value="J=4-56"/>
</dbReference>
<dbReference type="PDB" id="5LZS">
    <property type="method" value="EM"/>
    <property type="resolution" value="3.31 A"/>
    <property type="chains" value="dd=1-56"/>
</dbReference>
<dbReference type="PDB" id="5LZT">
    <property type="method" value="EM"/>
    <property type="resolution" value="3.65 A"/>
    <property type="chains" value="dd=1-56"/>
</dbReference>
<dbReference type="PDB" id="5LZU">
    <property type="method" value="EM"/>
    <property type="resolution" value="3.75 A"/>
    <property type="chains" value="dd=1-56"/>
</dbReference>
<dbReference type="PDB" id="5LZV">
    <property type="method" value="EM"/>
    <property type="resolution" value="3.35 A"/>
    <property type="chains" value="dd=1-56"/>
</dbReference>
<dbReference type="PDB" id="5LZW">
    <property type="method" value="EM"/>
    <property type="resolution" value="3.53 A"/>
    <property type="chains" value="dd=1-56"/>
</dbReference>
<dbReference type="PDB" id="5LZX">
    <property type="method" value="EM"/>
    <property type="resolution" value="3.67 A"/>
    <property type="chains" value="dd=1-56"/>
</dbReference>
<dbReference type="PDB" id="5LZY">
    <property type="method" value="EM"/>
    <property type="resolution" value="3.99 A"/>
    <property type="chains" value="dd=1-56"/>
</dbReference>
<dbReference type="PDB" id="5LZZ">
    <property type="method" value="EM"/>
    <property type="resolution" value="3.47 A"/>
    <property type="chains" value="dd=1-56"/>
</dbReference>
<dbReference type="PDB" id="6D90">
    <property type="method" value="EM"/>
    <property type="resolution" value="3.20 A"/>
    <property type="chains" value="ee=1-56"/>
</dbReference>
<dbReference type="PDB" id="6GZ3">
    <property type="method" value="EM"/>
    <property type="resolution" value="3.60 A"/>
    <property type="chains" value="Bd=5-55"/>
</dbReference>
<dbReference type="PDB" id="6HCF">
    <property type="method" value="EM"/>
    <property type="resolution" value="3.90 A"/>
    <property type="chains" value="e1=1-56"/>
</dbReference>
<dbReference type="PDB" id="6HCJ">
    <property type="method" value="EM"/>
    <property type="resolution" value="3.80 A"/>
    <property type="chains" value="e2=1-56"/>
</dbReference>
<dbReference type="PDB" id="6HCM">
    <property type="method" value="EM"/>
    <property type="resolution" value="6.80 A"/>
    <property type="chains" value="e1=1-56"/>
</dbReference>
<dbReference type="PDB" id="6HCQ">
    <property type="method" value="EM"/>
    <property type="resolution" value="6.50 A"/>
    <property type="chains" value="e2=1-56"/>
</dbReference>
<dbReference type="PDB" id="6MTB">
    <property type="method" value="EM"/>
    <property type="resolution" value="3.60 A"/>
    <property type="chains" value="dd=2-56"/>
</dbReference>
<dbReference type="PDB" id="6MTC">
    <property type="method" value="EM"/>
    <property type="resolution" value="3.40 A"/>
    <property type="chains" value="dd=2-56"/>
</dbReference>
<dbReference type="PDB" id="6MTD">
    <property type="method" value="EM"/>
    <property type="resolution" value="3.30 A"/>
    <property type="chains" value="dd=2-56"/>
</dbReference>
<dbReference type="PDB" id="6MTE">
    <property type="method" value="EM"/>
    <property type="resolution" value="3.40 A"/>
    <property type="chains" value="dd=2-56"/>
</dbReference>
<dbReference type="PDB" id="6P4G">
    <property type="method" value="EM"/>
    <property type="resolution" value="3.10 A"/>
    <property type="chains" value="e=1-56"/>
</dbReference>
<dbReference type="PDB" id="6P4H">
    <property type="method" value="EM"/>
    <property type="resolution" value="3.20 A"/>
    <property type="chains" value="e=1-56"/>
</dbReference>
<dbReference type="PDB" id="6P5I">
    <property type="method" value="EM"/>
    <property type="resolution" value="3.10 A"/>
    <property type="chains" value="e=1-56"/>
</dbReference>
<dbReference type="PDB" id="6P5J">
    <property type="method" value="EM"/>
    <property type="resolution" value="3.10 A"/>
    <property type="chains" value="e=1-56"/>
</dbReference>
<dbReference type="PDB" id="6P5K">
    <property type="method" value="EM"/>
    <property type="resolution" value="3.10 A"/>
    <property type="chains" value="e=1-56"/>
</dbReference>
<dbReference type="PDB" id="6P5N">
    <property type="method" value="EM"/>
    <property type="resolution" value="3.20 A"/>
    <property type="chains" value="e=1-56"/>
</dbReference>
<dbReference type="PDB" id="6R5Q">
    <property type="method" value="EM"/>
    <property type="resolution" value="3.00 A"/>
    <property type="chains" value="9=2-56"/>
</dbReference>
<dbReference type="PDB" id="6R6G">
    <property type="method" value="EM"/>
    <property type="resolution" value="3.70 A"/>
    <property type="chains" value="9=2-56"/>
</dbReference>
<dbReference type="PDB" id="6R6P">
    <property type="method" value="EM"/>
    <property type="resolution" value="3.10 A"/>
    <property type="chains" value="w=2-56"/>
</dbReference>
<dbReference type="PDB" id="6R7Q">
    <property type="method" value="EM"/>
    <property type="resolution" value="3.90 A"/>
    <property type="chains" value="9=2-56"/>
</dbReference>
<dbReference type="PDB" id="6SGC">
    <property type="method" value="EM"/>
    <property type="resolution" value="2.80 A"/>
    <property type="chains" value="e1=1-56"/>
</dbReference>
<dbReference type="PDB" id="6W2S">
    <property type="method" value="EM"/>
    <property type="resolution" value="3.00 A"/>
    <property type="chains" value="e=1-56"/>
</dbReference>
<dbReference type="PDB" id="6W2T">
    <property type="method" value="EM"/>
    <property type="resolution" value="3.36 A"/>
    <property type="chains" value="e=1-56"/>
</dbReference>
<dbReference type="PDB" id="6YAL">
    <property type="method" value="EM"/>
    <property type="resolution" value="3.00 A"/>
    <property type="chains" value="e=1-56"/>
</dbReference>
<dbReference type="PDB" id="6YAM">
    <property type="method" value="EM"/>
    <property type="resolution" value="3.60 A"/>
    <property type="chains" value="e=4-56"/>
</dbReference>
<dbReference type="PDB" id="6YAN">
    <property type="method" value="EM"/>
    <property type="resolution" value="3.48 A"/>
    <property type="chains" value="e=4-56"/>
</dbReference>
<dbReference type="PDB" id="6ZVK">
    <property type="method" value="EM"/>
    <property type="resolution" value="3.49 A"/>
    <property type="chains" value="H3=4-56"/>
</dbReference>
<dbReference type="PDB" id="7A01">
    <property type="method" value="EM"/>
    <property type="resolution" value="3.60 A"/>
    <property type="chains" value="H3=4-56"/>
</dbReference>
<dbReference type="PDB" id="7MDZ">
    <property type="method" value="EM"/>
    <property type="resolution" value="3.20 A"/>
    <property type="chains" value="dd=1-56"/>
</dbReference>
<dbReference type="PDB" id="7NWG">
    <property type="method" value="EM"/>
    <property type="resolution" value="3.80 A"/>
    <property type="chains" value="e2=2-56"/>
</dbReference>
<dbReference type="PDB" id="7NWI">
    <property type="method" value="EM"/>
    <property type="resolution" value="3.13 A"/>
    <property type="chains" value="dd=4-56"/>
</dbReference>
<dbReference type="PDB" id="7O7Y">
    <property type="method" value="EM"/>
    <property type="resolution" value="2.20 A"/>
    <property type="chains" value="AG=1-56"/>
</dbReference>
<dbReference type="PDB" id="7O7Z">
    <property type="method" value="EM"/>
    <property type="resolution" value="2.40 A"/>
    <property type="chains" value="AG=1-56"/>
</dbReference>
<dbReference type="PDB" id="7O80">
    <property type="method" value="EM"/>
    <property type="resolution" value="2.90 A"/>
    <property type="chains" value="AG=1-56"/>
</dbReference>
<dbReference type="PDB" id="7O81">
    <property type="method" value="EM"/>
    <property type="resolution" value="3.10 A"/>
    <property type="chains" value="AG=1-56"/>
</dbReference>
<dbReference type="PDB" id="7OYD">
    <property type="method" value="EM"/>
    <property type="resolution" value="2.30 A"/>
    <property type="chains" value="Dd=1-56"/>
</dbReference>
<dbReference type="PDB" id="7SYG">
    <property type="method" value="EM"/>
    <property type="resolution" value="4.30 A"/>
    <property type="chains" value="e=1-56"/>
</dbReference>
<dbReference type="PDB" id="7SYH">
    <property type="method" value="EM"/>
    <property type="resolution" value="4.60 A"/>
    <property type="chains" value="e=1-56"/>
</dbReference>
<dbReference type="PDB" id="7SYI">
    <property type="method" value="EM"/>
    <property type="resolution" value="4.50 A"/>
    <property type="chains" value="e=1-56"/>
</dbReference>
<dbReference type="PDB" id="7SYJ">
    <property type="method" value="EM"/>
    <property type="resolution" value="4.80 A"/>
    <property type="chains" value="e=1-56"/>
</dbReference>
<dbReference type="PDB" id="7SYK">
    <property type="method" value="EM"/>
    <property type="resolution" value="4.20 A"/>
    <property type="chains" value="e=1-56"/>
</dbReference>
<dbReference type="PDB" id="7SYL">
    <property type="method" value="EM"/>
    <property type="resolution" value="4.50 A"/>
    <property type="chains" value="e=1-56"/>
</dbReference>
<dbReference type="PDB" id="7SYM">
    <property type="method" value="EM"/>
    <property type="resolution" value="4.80 A"/>
    <property type="chains" value="e=1-56"/>
</dbReference>
<dbReference type="PDB" id="7SYN">
    <property type="method" value="EM"/>
    <property type="resolution" value="4.00 A"/>
    <property type="chains" value="e=1-56"/>
</dbReference>
<dbReference type="PDB" id="7SYO">
    <property type="method" value="EM"/>
    <property type="resolution" value="4.60 A"/>
    <property type="chains" value="e=1-56"/>
</dbReference>
<dbReference type="PDB" id="7SYP">
    <property type="method" value="EM"/>
    <property type="resolution" value="4.00 A"/>
    <property type="chains" value="e=1-56"/>
</dbReference>
<dbReference type="PDB" id="7SYQ">
    <property type="method" value="EM"/>
    <property type="resolution" value="3.80 A"/>
    <property type="chains" value="e=1-56"/>
</dbReference>
<dbReference type="PDB" id="7SYR">
    <property type="method" value="EM"/>
    <property type="resolution" value="3.60 A"/>
    <property type="chains" value="e=1-56"/>
</dbReference>
<dbReference type="PDB" id="7SYS">
    <property type="method" value="EM"/>
    <property type="resolution" value="3.50 A"/>
    <property type="chains" value="e=1-56"/>
</dbReference>
<dbReference type="PDB" id="7SYT">
    <property type="method" value="EM"/>
    <property type="resolution" value="4.40 A"/>
    <property type="chains" value="e=1-56"/>
</dbReference>
<dbReference type="PDB" id="7SYU">
    <property type="method" value="EM"/>
    <property type="resolution" value="4.60 A"/>
    <property type="chains" value="e=1-56"/>
</dbReference>
<dbReference type="PDB" id="7SYV">
    <property type="method" value="EM"/>
    <property type="resolution" value="3.90 A"/>
    <property type="chains" value="e=1-56"/>
</dbReference>
<dbReference type="PDB" id="7SYW">
    <property type="method" value="EM"/>
    <property type="resolution" value="3.70 A"/>
    <property type="chains" value="e=1-56"/>
</dbReference>
<dbReference type="PDB" id="7SYX">
    <property type="method" value="EM"/>
    <property type="resolution" value="3.70 A"/>
    <property type="chains" value="e=1-56"/>
</dbReference>
<dbReference type="PDB" id="7TOQ">
    <property type="method" value="EM"/>
    <property type="resolution" value="3.10 A"/>
    <property type="chains" value="AS29=2-56"/>
</dbReference>
<dbReference type="PDB" id="7TOR">
    <property type="method" value="EM"/>
    <property type="resolution" value="2.90 A"/>
    <property type="chains" value="AS29=2-56"/>
</dbReference>
<dbReference type="PDB" id="7UCJ">
    <property type="method" value="EM"/>
    <property type="resolution" value="3.10 A"/>
    <property type="chains" value="Dd=2-56"/>
</dbReference>
<dbReference type="PDB" id="7UCK">
    <property type="method" value="EM"/>
    <property type="resolution" value="2.80 A"/>
    <property type="chains" value="Dd=2-56"/>
</dbReference>
<dbReference type="PDB" id="7ZJW">
    <property type="method" value="EM"/>
    <property type="resolution" value="2.80 A"/>
    <property type="chains" value="SH=1-56"/>
</dbReference>
<dbReference type="PDB" id="7ZJX">
    <property type="method" value="EM"/>
    <property type="resolution" value="3.10 A"/>
    <property type="chains" value="SH=1-56"/>
</dbReference>
<dbReference type="PDB" id="8BHF">
    <property type="method" value="EM"/>
    <property type="resolution" value="3.10 A"/>
    <property type="chains" value="e3=2-56"/>
</dbReference>
<dbReference type="PDB" id="8BTK">
    <property type="method" value="EM"/>
    <property type="resolution" value="3.50 A"/>
    <property type="chains" value="AG=1-56"/>
</dbReference>
<dbReference type="PDB" id="8P03">
    <property type="method" value="EM"/>
    <property type="resolution" value="3.04 A"/>
    <property type="chains" value="e=1-56"/>
</dbReference>
<dbReference type="PDB" id="8P09">
    <property type="method" value="EM"/>
    <property type="resolution" value="3.30 A"/>
    <property type="chains" value="e=1-56"/>
</dbReference>
<dbReference type="PDB" id="8P2K">
    <property type="method" value="EM"/>
    <property type="resolution" value="2.90 A"/>
    <property type="chains" value="AG=1-56"/>
</dbReference>
<dbReference type="PDB" id="8SCB">
    <property type="method" value="EM"/>
    <property type="resolution" value="2.50 A"/>
    <property type="chains" value="dd=1-56"/>
</dbReference>
<dbReference type="PDB" id="8VFT">
    <property type="method" value="EM"/>
    <property type="resolution" value="3.30 A"/>
    <property type="chains" value="dd=1-56"/>
</dbReference>
<dbReference type="PDB" id="9BDL">
    <property type="method" value="EM"/>
    <property type="resolution" value="2.80 A"/>
    <property type="chains" value="AS29=2-56"/>
</dbReference>
<dbReference type="PDB" id="9BDN">
    <property type="method" value="EM"/>
    <property type="resolution" value="3.10 A"/>
    <property type="chains" value="AS29=2-56"/>
</dbReference>
<dbReference type="PDB" id="9BDP">
    <property type="method" value="EM"/>
    <property type="resolution" value="3.70 A"/>
    <property type="chains" value="AS29=2-56"/>
</dbReference>
<dbReference type="PDB" id="9C8K">
    <property type="method" value="EM"/>
    <property type="resolution" value="3.10 A"/>
    <property type="chains" value="d=1-56"/>
</dbReference>
<dbReference type="PDB" id="9F1B">
    <property type="method" value="EM"/>
    <property type="resolution" value="3.01 A"/>
    <property type="chains" value="AG=1-56"/>
</dbReference>
<dbReference type="PDB" id="9F1C">
    <property type="method" value="EM"/>
    <property type="resolution" value="3.78 A"/>
    <property type="chains" value="AG=1-56"/>
</dbReference>
<dbReference type="PDB" id="9F1D">
    <property type="method" value="EM"/>
    <property type="resolution" value="3.26 A"/>
    <property type="chains" value="AG=1-56"/>
</dbReference>
<dbReference type="PDBsum" id="3JAG"/>
<dbReference type="PDBsum" id="3JAH"/>
<dbReference type="PDBsum" id="3JAI"/>
<dbReference type="PDBsum" id="4D5L"/>
<dbReference type="PDBsum" id="4D61"/>
<dbReference type="PDBsum" id="4KZX"/>
<dbReference type="PDBsum" id="4KZY"/>
<dbReference type="PDBsum" id="4KZZ"/>
<dbReference type="PDBsum" id="5K0Y"/>
<dbReference type="PDBsum" id="5LZS"/>
<dbReference type="PDBsum" id="5LZT"/>
<dbReference type="PDBsum" id="5LZU"/>
<dbReference type="PDBsum" id="5LZV"/>
<dbReference type="PDBsum" id="5LZW"/>
<dbReference type="PDBsum" id="5LZX"/>
<dbReference type="PDBsum" id="5LZY"/>
<dbReference type="PDBsum" id="5LZZ"/>
<dbReference type="PDBsum" id="6D90"/>
<dbReference type="PDBsum" id="6GZ3"/>
<dbReference type="PDBsum" id="6HCF"/>
<dbReference type="PDBsum" id="6HCJ"/>
<dbReference type="PDBsum" id="6HCM"/>
<dbReference type="PDBsum" id="6HCQ"/>
<dbReference type="PDBsum" id="6MTB"/>
<dbReference type="PDBsum" id="6MTC"/>
<dbReference type="PDBsum" id="6MTD"/>
<dbReference type="PDBsum" id="6MTE"/>
<dbReference type="PDBsum" id="6P4G"/>
<dbReference type="PDBsum" id="6P4H"/>
<dbReference type="PDBsum" id="6P5I"/>
<dbReference type="PDBsum" id="6P5J"/>
<dbReference type="PDBsum" id="6P5K"/>
<dbReference type="PDBsum" id="6P5N"/>
<dbReference type="PDBsum" id="6R5Q"/>
<dbReference type="PDBsum" id="6R6G"/>
<dbReference type="PDBsum" id="6R6P"/>
<dbReference type="PDBsum" id="6R7Q"/>
<dbReference type="PDBsum" id="6SGC"/>
<dbReference type="PDBsum" id="6W2S"/>
<dbReference type="PDBsum" id="6W2T"/>
<dbReference type="PDBsum" id="6YAL"/>
<dbReference type="PDBsum" id="6YAM"/>
<dbReference type="PDBsum" id="6YAN"/>
<dbReference type="PDBsum" id="6ZVK"/>
<dbReference type="PDBsum" id="7A01"/>
<dbReference type="PDBsum" id="7MDZ"/>
<dbReference type="PDBsum" id="7NWG"/>
<dbReference type="PDBsum" id="7NWI"/>
<dbReference type="PDBsum" id="7O7Y"/>
<dbReference type="PDBsum" id="7O7Z"/>
<dbReference type="PDBsum" id="7O80"/>
<dbReference type="PDBsum" id="7O81"/>
<dbReference type="PDBsum" id="7OYD"/>
<dbReference type="PDBsum" id="7SYG"/>
<dbReference type="PDBsum" id="7SYH"/>
<dbReference type="PDBsum" id="7SYI"/>
<dbReference type="PDBsum" id="7SYJ"/>
<dbReference type="PDBsum" id="7SYK"/>
<dbReference type="PDBsum" id="7SYL"/>
<dbReference type="PDBsum" id="7SYM"/>
<dbReference type="PDBsum" id="7SYN"/>
<dbReference type="PDBsum" id="7SYO"/>
<dbReference type="PDBsum" id="7SYP"/>
<dbReference type="PDBsum" id="7SYQ"/>
<dbReference type="PDBsum" id="7SYR"/>
<dbReference type="PDBsum" id="7SYS"/>
<dbReference type="PDBsum" id="7SYT"/>
<dbReference type="PDBsum" id="7SYU"/>
<dbReference type="PDBsum" id="7SYV"/>
<dbReference type="PDBsum" id="7SYW"/>
<dbReference type="PDBsum" id="7SYX"/>
<dbReference type="PDBsum" id="7TOQ"/>
<dbReference type="PDBsum" id="7TOR"/>
<dbReference type="PDBsum" id="7UCJ"/>
<dbReference type="PDBsum" id="7UCK"/>
<dbReference type="PDBsum" id="7ZJW"/>
<dbReference type="PDBsum" id="7ZJX"/>
<dbReference type="PDBsum" id="8BHF"/>
<dbReference type="PDBsum" id="8BTK"/>
<dbReference type="PDBsum" id="8P03"/>
<dbReference type="PDBsum" id="8P09"/>
<dbReference type="PDBsum" id="8P2K"/>
<dbReference type="PDBsum" id="8SCB"/>
<dbReference type="PDBsum" id="8VFT"/>
<dbReference type="PDBsum" id="9BDL"/>
<dbReference type="PDBsum" id="9BDN"/>
<dbReference type="PDBsum" id="9BDP"/>
<dbReference type="PDBsum" id="9C8K"/>
<dbReference type="PDBsum" id="9F1B"/>
<dbReference type="PDBsum" id="9F1C"/>
<dbReference type="PDBsum" id="9F1D"/>
<dbReference type="EMDB" id="EMD-0098"/>
<dbReference type="EMDB" id="EMD-0192"/>
<dbReference type="EMDB" id="EMD-0194"/>
<dbReference type="EMDB" id="EMD-0195"/>
<dbReference type="EMDB" id="EMD-0197"/>
<dbReference type="EMDB" id="EMD-10181"/>
<dbReference type="EMDB" id="EMD-10760"/>
<dbReference type="EMDB" id="EMD-10761"/>
<dbReference type="EMDB" id="EMD-10762"/>
<dbReference type="EMDB" id="EMD-11459"/>
<dbReference type="EMDB" id="EMD-11590"/>
<dbReference type="EMDB" id="EMD-12631"/>
<dbReference type="EMDB" id="EMD-12633"/>
<dbReference type="EMDB" id="EMD-12756"/>
<dbReference type="EMDB" id="EMD-12757"/>
<dbReference type="EMDB" id="EMD-12758"/>
<dbReference type="EMDB" id="EMD-12759"/>
<dbReference type="EMDB" id="EMD-13114"/>
<dbReference type="EMDB" id="EMD-14751"/>
<dbReference type="EMDB" id="EMD-14752"/>
<dbReference type="EMDB" id="EMD-16052"/>
<dbReference type="EMDB" id="EMD-16232"/>
<dbReference type="EMDB" id="EMD-17329"/>
<dbReference type="EMDB" id="EMD-17330"/>
<dbReference type="EMDB" id="EMD-17367"/>
<dbReference type="EMDB" id="EMD-20248"/>
<dbReference type="EMDB" id="EMD-20249"/>
<dbReference type="EMDB" id="EMD-20255"/>
<dbReference type="EMDB" id="EMD-20256"/>
<dbReference type="EMDB" id="EMD-20257"/>
<dbReference type="EMDB" id="EMD-20258"/>
<dbReference type="EMDB" id="EMD-21529"/>
<dbReference type="EMDB" id="EMD-21530"/>
<dbReference type="EMDB" id="EMD-23785"/>
<dbReference type="EMDB" id="EMD-25527"/>
<dbReference type="EMDB" id="EMD-25528"/>
<dbReference type="EMDB" id="EMD-25529"/>
<dbReference type="EMDB" id="EMD-25530"/>
<dbReference type="EMDB" id="EMD-25531"/>
<dbReference type="EMDB" id="EMD-25532"/>
<dbReference type="EMDB" id="EMD-25533"/>
<dbReference type="EMDB" id="EMD-25534"/>
<dbReference type="EMDB" id="EMD-25535"/>
<dbReference type="EMDB" id="EMD-25536"/>
<dbReference type="EMDB" id="EMD-25537"/>
<dbReference type="EMDB" id="EMD-25538"/>
<dbReference type="EMDB" id="EMD-25539"/>
<dbReference type="EMDB" id="EMD-25540"/>
<dbReference type="EMDB" id="EMD-25541"/>
<dbReference type="EMDB" id="EMD-25542"/>
<dbReference type="EMDB" id="EMD-25543"/>
<dbReference type="EMDB" id="EMD-25544"/>
<dbReference type="EMDB" id="EMD-26035"/>
<dbReference type="EMDB" id="EMD-26036"/>
<dbReference type="EMDB" id="EMD-26444"/>
<dbReference type="EMDB" id="EMD-26445"/>
<dbReference type="EMDB" id="EMD-40344"/>
<dbReference type="EMDB" id="EMD-4130"/>
<dbReference type="EMDB" id="EMD-4131"/>
<dbReference type="EMDB" id="EMD-4132"/>
<dbReference type="EMDB" id="EMD-4133"/>
<dbReference type="EMDB" id="EMD-4134"/>
<dbReference type="EMDB" id="EMD-4135"/>
<dbReference type="EMDB" id="EMD-4136"/>
<dbReference type="EMDB" id="EMD-4137"/>
<dbReference type="EMDB" id="EMD-43189"/>
<dbReference type="EMDB" id="EMD-44461"/>
<dbReference type="EMDB" id="EMD-44463"/>
<dbReference type="EMDB" id="EMD-44464"/>
<dbReference type="EMDB" id="EMD-45307"/>
<dbReference type="EMDB" id="EMD-4729"/>
<dbReference type="EMDB" id="EMD-4735"/>
<dbReference type="EMDB" id="EMD-4737"/>
<dbReference type="EMDB" id="EMD-4745"/>
<dbReference type="EMDB" id="EMD-50124"/>
<dbReference type="EMDB" id="EMD-50125"/>
<dbReference type="EMDB" id="EMD-50126"/>
<dbReference type="EMDB" id="EMD-7834"/>
<dbReference type="EMDB" id="EMD-8190"/>
<dbReference type="EMDB" id="EMD-9237"/>
<dbReference type="EMDB" id="EMD-9239"/>
<dbReference type="EMDB" id="EMD-9240"/>
<dbReference type="EMDB" id="EMD-9242"/>
<dbReference type="SMR" id="G1U7M4"/>
<dbReference type="FunCoup" id="G1U7M4">
    <property type="interactions" value="974"/>
</dbReference>
<dbReference type="IntAct" id="G1U7M4">
    <property type="interactions" value="1"/>
</dbReference>
<dbReference type="STRING" id="9986.ENSOCUP00000025432"/>
<dbReference type="PaxDb" id="9986-ENSOCUP00000025432"/>
<dbReference type="Ensembl" id="ENSOCUT00000023198.1">
    <property type="protein sequence ID" value="ENSOCUP00000025432.1"/>
    <property type="gene ID" value="ENSOCUG00000027423.1"/>
</dbReference>
<dbReference type="GeneID" id="100347924"/>
<dbReference type="KEGG" id="ocu:100347924"/>
<dbReference type="CTD" id="6235"/>
<dbReference type="eggNOG" id="KOG3506">
    <property type="taxonomic scope" value="Eukaryota"/>
</dbReference>
<dbReference type="GeneTree" id="ENSGT00940000154720"/>
<dbReference type="HOGENOM" id="CLU_177289_1_1_1"/>
<dbReference type="InParanoid" id="G1U7M4"/>
<dbReference type="OMA" id="HCFREIA"/>
<dbReference type="OrthoDB" id="10252683at2759"/>
<dbReference type="TreeFam" id="TF300217"/>
<dbReference type="EvolutionaryTrace" id="G1U7M4"/>
<dbReference type="Proteomes" id="UP000001811">
    <property type="component" value="Chromosome 17"/>
</dbReference>
<dbReference type="Bgee" id="ENSOCUG00000027423">
    <property type="expression patterns" value="Expressed in blood and 17 other cell types or tissues"/>
</dbReference>
<dbReference type="GO" id="GO:0022626">
    <property type="term" value="C:cytosolic ribosome"/>
    <property type="evidence" value="ECO:0000314"/>
    <property type="project" value="UniProtKB"/>
</dbReference>
<dbReference type="GO" id="GO:0022627">
    <property type="term" value="C:cytosolic small ribosomal subunit"/>
    <property type="evidence" value="ECO:0007669"/>
    <property type="project" value="Ensembl"/>
</dbReference>
<dbReference type="GO" id="GO:0005791">
    <property type="term" value="C:rough endoplasmic reticulum"/>
    <property type="evidence" value="ECO:0007669"/>
    <property type="project" value="UniProtKB-SubCell"/>
</dbReference>
<dbReference type="GO" id="GO:0003735">
    <property type="term" value="F:structural constituent of ribosome"/>
    <property type="evidence" value="ECO:0000314"/>
    <property type="project" value="UniProtKB"/>
</dbReference>
<dbReference type="GO" id="GO:0008270">
    <property type="term" value="F:zinc ion binding"/>
    <property type="evidence" value="ECO:0007669"/>
    <property type="project" value="InterPro"/>
</dbReference>
<dbReference type="GO" id="GO:0002181">
    <property type="term" value="P:cytoplasmic translation"/>
    <property type="evidence" value="ECO:0007669"/>
    <property type="project" value="TreeGrafter"/>
</dbReference>
<dbReference type="FunFam" id="4.10.830.10:FF:000002">
    <property type="entry name" value="40S ribosomal protein S29"/>
    <property type="match status" value="1"/>
</dbReference>
<dbReference type="Gene3D" id="4.10.830.10">
    <property type="entry name" value="30s Ribosomal Protein S14, Chain N"/>
    <property type="match status" value="1"/>
</dbReference>
<dbReference type="InterPro" id="IPR001209">
    <property type="entry name" value="Ribosomal_uS14"/>
</dbReference>
<dbReference type="InterPro" id="IPR018271">
    <property type="entry name" value="Ribosomal_uS14_CS"/>
</dbReference>
<dbReference type="InterPro" id="IPR039744">
    <property type="entry name" value="RIbosomal_uS14_euk_arc"/>
</dbReference>
<dbReference type="InterPro" id="IPR043140">
    <property type="entry name" value="Ribosomal_uS14_sf"/>
</dbReference>
<dbReference type="NCBIfam" id="NF004424">
    <property type="entry name" value="PRK05766.1"/>
    <property type="match status" value="1"/>
</dbReference>
<dbReference type="PANTHER" id="PTHR12010">
    <property type="entry name" value="40S RIBOSOMAL PROTEIN S29"/>
    <property type="match status" value="1"/>
</dbReference>
<dbReference type="PANTHER" id="PTHR12010:SF26">
    <property type="entry name" value="SMALL RIBOSOMAL SUBUNIT PROTEIN US14"/>
    <property type="match status" value="1"/>
</dbReference>
<dbReference type="Pfam" id="PF00253">
    <property type="entry name" value="Ribosomal_S14"/>
    <property type="match status" value="1"/>
</dbReference>
<dbReference type="PROSITE" id="PS00527">
    <property type="entry name" value="RIBOSOMAL_S14"/>
    <property type="match status" value="1"/>
</dbReference>
<name>RS29_RABIT</name>
<organism>
    <name type="scientific">Oryctolagus cuniculus</name>
    <name type="common">Rabbit</name>
    <dbReference type="NCBI Taxonomy" id="9986"/>
    <lineage>
        <taxon>Eukaryota</taxon>
        <taxon>Metazoa</taxon>
        <taxon>Chordata</taxon>
        <taxon>Craniata</taxon>
        <taxon>Vertebrata</taxon>
        <taxon>Euteleostomi</taxon>
        <taxon>Mammalia</taxon>
        <taxon>Eutheria</taxon>
        <taxon>Euarchontoglires</taxon>
        <taxon>Glires</taxon>
        <taxon>Lagomorpha</taxon>
        <taxon>Leporidae</taxon>
        <taxon>Oryctolagus</taxon>
    </lineage>
</organism>
<keyword id="KW-0002">3D-structure</keyword>
<keyword id="KW-0007">Acetylation</keyword>
<keyword id="KW-0963">Cytoplasm</keyword>
<keyword id="KW-0256">Endoplasmic reticulum</keyword>
<keyword id="KW-0479">Metal-binding</keyword>
<keyword id="KW-0488">Methylation</keyword>
<keyword id="KW-0597">Phosphoprotein</keyword>
<keyword id="KW-1185">Reference proteome</keyword>
<keyword id="KW-0687">Ribonucleoprotein</keyword>
<keyword id="KW-0689">Ribosomal protein</keyword>
<keyword id="KW-0862">Zinc</keyword>
<reference key="1">
    <citation type="journal article" date="2011" name="Nature">
        <title>A high-resolution map of human evolutionary constraint using 29 mammals.</title>
        <authorList>
            <person name="Lindblad-Toh K."/>
            <person name="Garber M."/>
            <person name="Zuk O."/>
            <person name="Lin M.F."/>
            <person name="Parker B.J."/>
            <person name="Washietl S."/>
            <person name="Kheradpour P."/>
            <person name="Ernst J."/>
            <person name="Jordan G."/>
            <person name="Mauceli E."/>
            <person name="Ward L.D."/>
            <person name="Lowe C.B."/>
            <person name="Holloway A.K."/>
            <person name="Clamp M."/>
            <person name="Gnerre S."/>
            <person name="Alfoldi J."/>
            <person name="Beal K."/>
            <person name="Chang J."/>
            <person name="Clawson H."/>
            <person name="Cuff J."/>
            <person name="Di Palma F."/>
            <person name="Fitzgerald S."/>
            <person name="Flicek P."/>
            <person name="Guttman M."/>
            <person name="Hubisz M.J."/>
            <person name="Jaffe D.B."/>
            <person name="Jungreis I."/>
            <person name="Kent W.J."/>
            <person name="Kostka D."/>
            <person name="Lara M."/>
            <person name="Martins A.L."/>
            <person name="Massingham T."/>
            <person name="Moltke I."/>
            <person name="Raney B.J."/>
            <person name="Rasmussen M.D."/>
            <person name="Robinson J."/>
            <person name="Stark A."/>
            <person name="Vilella A.J."/>
            <person name="Wen J."/>
            <person name="Xie X."/>
            <person name="Zody M.C."/>
            <person name="Baldwin J."/>
            <person name="Bloom T."/>
            <person name="Chin C.W."/>
            <person name="Heiman D."/>
            <person name="Nicol R."/>
            <person name="Nusbaum C."/>
            <person name="Young S."/>
            <person name="Wilkinson J."/>
            <person name="Worley K.C."/>
            <person name="Kovar C.L."/>
            <person name="Muzny D.M."/>
            <person name="Gibbs R.A."/>
            <person name="Cree A."/>
            <person name="Dihn H.H."/>
            <person name="Fowler G."/>
            <person name="Jhangiani S."/>
            <person name="Joshi V."/>
            <person name="Lee S."/>
            <person name="Lewis L.R."/>
            <person name="Nazareth L.V."/>
            <person name="Okwuonu G."/>
            <person name="Santibanez J."/>
            <person name="Warren W.C."/>
            <person name="Mardis E.R."/>
            <person name="Weinstock G.M."/>
            <person name="Wilson R.K."/>
            <person name="Delehaunty K."/>
            <person name="Dooling D."/>
            <person name="Fronik C."/>
            <person name="Fulton L."/>
            <person name="Fulton B."/>
            <person name="Graves T."/>
            <person name="Minx P."/>
            <person name="Sodergren E."/>
            <person name="Birney E."/>
            <person name="Margulies E.H."/>
            <person name="Herrero J."/>
            <person name="Green E.D."/>
            <person name="Haussler D."/>
            <person name="Siepel A."/>
            <person name="Goldman N."/>
            <person name="Pollard K.S."/>
            <person name="Pedersen J.S."/>
            <person name="Lander E.S."/>
            <person name="Kellis M."/>
        </authorList>
    </citation>
    <scope>NUCLEOTIDE SEQUENCE [LARGE SCALE GENOMIC DNA]</scope>
    <source>
        <strain>Thorbecke</strain>
    </source>
</reference>
<reference evidence="24 25" key="2">
    <citation type="journal article" date="2013" name="Nature">
        <title>The initiation of mammalian protein synthesis and mRNA scanning mechanism.</title>
        <authorList>
            <person name="Lomakin I.B."/>
            <person name="Steitz T.A."/>
        </authorList>
    </citation>
    <scope>X-RAY CRYSTALLOGRAPHY (7.01 ANGSTROMS) OF 40S RIBOSOME</scope>
    <scope>FUNCTION</scope>
    <scope>SUBUNIT</scope>
    <scope>SUBCELLULAR LOCATION</scope>
</reference>
<reference evidence="23" key="3">
    <citation type="journal article" date="2015" name="Mol. Cell">
        <title>Cryo-EM of ribosomal 80S complexes with termination factors reveals the translocated cricket paralysis virus IRES.</title>
        <authorList>
            <person name="Muhs M."/>
            <person name="Hilal T."/>
            <person name="Mielke T."/>
            <person name="Skabkin M.A."/>
            <person name="Sanbonmatsu K.Y."/>
            <person name="Pestova T.V."/>
            <person name="Spahn C.M."/>
        </authorList>
    </citation>
    <scope>STRUCTURE BY ELECTRON MICROSCOPY (9.00 ANGSTROMS) OF RIBOSOME</scope>
    <scope>FUNCTION</scope>
    <scope>SUBUNIT</scope>
    <scope>SUBCELLULAR LOCATION</scope>
</reference>
<reference evidence="21 22" key="4">
    <citation type="journal article" date="2015" name="Nature">
        <title>Structural basis for stop codon recognition in eukaryotes.</title>
        <authorList>
            <person name="Brown A."/>
            <person name="Shao S."/>
            <person name="Murray J."/>
            <person name="Hegde R.S."/>
            <person name="Ramakrishnan V."/>
        </authorList>
    </citation>
    <scope>STRUCTURE BY ELECTRON MICROSCOPY (3.45 ANGSTROMS) IN COMPLEX WITH ZINC AND RIBOSOME</scope>
    <scope>FUNCTION</scope>
    <scope>SUBCELLULAR LOCATION</scope>
    <scope>SUBUNIT</scope>
</reference>
<reference evidence="26" key="5">
    <citation type="journal article" date="2016" name="Cell">
        <title>Decoding mammalian ribosome-mRNA states by translational GTPase complexes.</title>
        <authorList>
            <person name="Shao S."/>
            <person name="Murray J."/>
            <person name="Brown A."/>
            <person name="Taunton J."/>
            <person name="Ramakrishnan V."/>
            <person name="Hegde R.S."/>
        </authorList>
    </citation>
    <scope>STRUCTURE BY ELECTRON MICROSCOPY (3.31 ANGSTROMS) OF RIBOSOME</scope>
    <scope>FUNCTION</scope>
    <scope>SUBCELLULAR LOCATION</scope>
    <scope>SUBUNIT</scope>
</reference>
<reference evidence="28" key="6">
    <citation type="journal article" date="2018" name="Cell Rep.">
        <title>tRNA translocation by the eukaryotic 80S ribosome and the impact of GTP hydrolysis.</title>
        <authorList>
            <person name="Flis J."/>
            <person name="Holm M."/>
            <person name="Rundlet E.J."/>
            <person name="Loerke J."/>
            <person name="Hilal T."/>
            <person name="Dabrowski M."/>
            <person name="Burger J."/>
            <person name="Mielke T."/>
            <person name="Blanchard S.C."/>
            <person name="Spahn C.M.T."/>
            <person name="Budkevich T.V."/>
        </authorList>
    </citation>
    <scope>STRUCTURE BY ELECTRON MICROSCOPY (3.60 ANGSTROMS) OF RIBOSOME</scope>
    <scope>FUNCTION</scope>
    <scope>SUBCELLULAR LOCATION</scope>
    <scope>SUBUNIT</scope>
</reference>
<reference evidence="27" key="7">
    <citation type="journal article" date="2018" name="Elife">
        <title>Dual tRNA mimicry in the Cricket paralysis virus IRES uncovers an unexpected similarity with the Hepatitis C Virus IRES.</title>
        <authorList>
            <person name="Pisareva V.P."/>
            <person name="Pisarev A.V."/>
            <person name="Fernandez I.S."/>
        </authorList>
    </citation>
    <scope>STRUCTURE BY ELECTRON MICROSCOPY (3.20 ANGSTROMS) OF RIBOSOME</scope>
    <scope>SUBUNIT</scope>
    <scope>SUBCELLULAR LOCATION</scope>
</reference>
<reference evidence="31 32" key="8">
    <citation type="journal article" date="2018" name="Elife">
        <title>Structures of translationally inactive mammalian ribosomes.</title>
        <authorList>
            <person name="Brown A."/>
            <person name="Baird M.R."/>
            <person name="Yip M.C."/>
            <person name="Murray J."/>
            <person name="Shao S."/>
        </authorList>
    </citation>
    <scope>STRUCTURE BY ELECTRON MICROSCOPY (3.30 ANGSTROMS) OF RIBOSOME</scope>
    <scope>SUBCELLULAR LOCATION</scope>
    <scope>SUBUNIT</scope>
</reference>
<reference evidence="29 30" key="9">
    <citation type="journal article" date="2018" name="Mol. Cell">
        <title>ZNF598 is a quality control sensor of collided ribosomes.</title>
        <authorList>
            <person name="Juszkiewicz S."/>
            <person name="Chandrasekaran V."/>
            <person name="Lin Z."/>
            <person name="Kraatz S."/>
            <person name="Ramakrishnan V."/>
            <person name="Hegde R.S."/>
        </authorList>
    </citation>
    <scope>STRUCTURE BY ELECTRON MICROSCOPY (3.80 ANGSTROMS) OF RIBOSOME</scope>
    <scope>SUBCELLULAR LOCATION</scope>
    <scope>SUBUNIT</scope>
</reference>
<reference evidence="35 36" key="10">
    <citation type="journal article" date="2019" name="Elife">
        <title>Structural and mutational analysis of the ribosome-arresting human XBP1u.</title>
        <authorList>
            <person name="Shanmuganathan V."/>
            <person name="Schiller N."/>
            <person name="Magoulopoulou A."/>
            <person name="Cheng J."/>
            <person name="Braunger K."/>
            <person name="Cymer F."/>
            <person name="Berninghausen O."/>
            <person name="Beatrix B."/>
            <person name="Kohno K."/>
            <person name="von Heijne G."/>
            <person name="Beckmann R."/>
        </authorList>
    </citation>
    <scope>STRUCTURE BY ELECTRON MICROSCOPY (3.00 ANGSTROMS) OF RIBOSOME</scope>
    <scope>SUBCELLULAR LOCATION</scope>
    <scope>SUBUNIT</scope>
</reference>
<reference evidence="33 34" key="11">
    <citation type="journal article" date="2019" name="EMBO J.">
        <title>The Israeli acute paralysis virus IRES captures host ribosomes by mimicking a ribosomal state with hybrid tRNAs.</title>
        <authorList>
            <person name="Acosta-Reyes F."/>
            <person name="Neupane R."/>
            <person name="Frank J."/>
            <person name="Fernandez I.S."/>
        </authorList>
    </citation>
    <scope>STRUCTURE BY ELECTRON MICROSCOPY (3.10 ANGSTROMS) OF RIBOSOME</scope>
    <scope>SUBUNIT</scope>
    <scope>SUBCELLULAR LOCATION</scope>
</reference>
<reference evidence="37" key="12">
    <citation type="journal article" date="2019" name="Nat. Struct. Mol. Biol.">
        <title>Mechanism of ribosome stalling during translation of a poly(A) tail.</title>
        <authorList>
            <person name="Chandrasekaran V."/>
            <person name="Juszkiewicz S."/>
            <person name="Choi J."/>
            <person name="Puglisi J.D."/>
            <person name="Brown A."/>
            <person name="Shao S."/>
            <person name="Ramakrishnan V."/>
            <person name="Hegde R.S."/>
        </authorList>
    </citation>
    <scope>STRUCTURE BY ELECTRON MICROSCOPY (2.80 ANGSTROMS) OF RIBOSOME</scope>
    <scope>SUBCELLULAR LOCATION</scope>
    <scope>SUBUNIT</scope>
</reference>
<reference evidence="40 41" key="13">
    <citation type="journal article" date="2020" name="Cell Rep.">
        <title>The Halastavi arva virus intergenic region IRES promotes translation by the simplest possible initiation mechanism.</title>
        <authorList>
            <person name="Abaeva I.S."/>
            <person name="Vicens Q."/>
            <person name="Bochler A."/>
            <person name="Soufari H."/>
            <person name="Simonetti A."/>
            <person name="Pestova T.V."/>
            <person name="Hashem Y."/>
            <person name="Hellen C.U.T."/>
        </authorList>
    </citation>
    <scope>STRUCTURE BY ELECTRON MICROSCOPY (3.49 ANGSTROMS) OF RIBOSOME</scope>
    <scope>SUBCELLULAR LOCATION</scope>
    <scope>SUBUNIT</scope>
</reference>
<reference evidence="38 39" key="14">
    <citation type="journal article" date="2020" name="Elife">
        <title>A complex IRES at the 5'-UTR of a viral mRNA assembles a functional 48S complex via an uAUG intermediate.</title>
        <authorList>
            <person name="Neupane R."/>
            <person name="Pisareva V.P."/>
            <person name="Rodriguez C.F."/>
            <person name="Pisarev A.V."/>
            <person name="Fernandez I.S."/>
        </authorList>
    </citation>
    <scope>STRUCTURE BY ELECTRON MICROSCOPY (3.00 ANGSTROMS) OF RIBOSOME</scope>
    <scope>SUBUNIT</scope>
    <scope>SUBCELLULAR LOCATION</scope>
</reference>
<reference evidence="43 44" key="15">
    <citation type="journal article" date="2022" name="EMBO J.">
        <title>Molecular architecture of 40S translation initiation complexes on the hepatitis C virus IRES.</title>
        <authorList>
            <person name="Brown Z.P."/>
            <person name="Abaeva I.S."/>
            <person name="De S."/>
            <person name="Hellen C.U.T."/>
            <person name="Pestova T.V."/>
            <person name="Frank J."/>
        </authorList>
    </citation>
    <scope>STRUCTURE BY ELECTRON MICROSCOPY (3.50 ANGSTROMS) OF RIBOSOME</scope>
    <scope>SUBCELLULAR LOCATION</scope>
    <scope>SUBUNIT</scope>
</reference>
<reference evidence="45 46" key="16">
    <citation type="journal article" date="2022" name="Mol. Cell">
        <title>Direct epitranscriptomic regulation of mammalian translation initiation through N4-acetylcytidine.</title>
        <authorList>
            <person name="Arango D."/>
            <person name="Sturgill D."/>
            <person name="Yang R."/>
            <person name="Kanai T."/>
            <person name="Bauer P."/>
            <person name="Roy J."/>
            <person name="Wang Z."/>
            <person name="Hosogane M."/>
            <person name="Schiffers S."/>
            <person name="Oberdoerffer S."/>
        </authorList>
    </citation>
    <scope>STRUCTURE BY ELECTRON MICROSCOPY (2.80 ANGSTROMS) OF RIBOSOME</scope>
    <scope>SUBCELLULAR LOCATION</scope>
    <scope>SUBUNIT</scope>
</reference>
<reference evidence="47 48" key="17">
    <citation type="journal article" date="2022" name="Science">
        <title>Structure of the mammalian ribosome as it decodes the selenocysteine UGA codon.</title>
        <authorList>
            <person name="Hilal T."/>
            <person name="Killam B.Y."/>
            <person name="Grozdanovic M."/>
            <person name="Dobosz-Bartoszek M."/>
            <person name="Loerke J."/>
            <person name="Buerger J."/>
            <person name="Mielke T."/>
            <person name="Copeland P.R."/>
            <person name="Simonovic M."/>
            <person name="Spahn C.M.T."/>
        </authorList>
    </citation>
    <scope>STRUCTURE BY ELECTRON MICROSCOPY (2.80 ANGSTROMS) OF RIBOSOME</scope>
    <scope>SUBCELLULAR LOCATION</scope>
    <scope>SUBUNIT</scope>
</reference>
<reference evidence="42" key="18">
    <citation type="journal article" date="2023" name="Nature">
        <title>A molecular network of conserved factors keeps ribosomes dormant in the egg.</title>
        <authorList>
            <person name="Leesch F."/>
            <person name="Lorenzo-Orts L."/>
            <person name="Pribitzer C."/>
            <person name="Grishkovskaya I."/>
            <person name="Roehsner J."/>
            <person name="Chugunova A."/>
            <person name="Matzinger M."/>
            <person name="Roitinger E."/>
            <person name="Belacic K."/>
            <person name="Kandolf S."/>
            <person name="Lin T.Y."/>
            <person name="Mechtler K."/>
            <person name="Meinhart A."/>
            <person name="Haselbach D."/>
            <person name="Pauli A."/>
        </authorList>
    </citation>
    <scope>STRUCTURE BY ELECTRON MICROSCOPY (2.30 ANGSTROMS) OF RIBOSOME</scope>
    <scope>SUBCELLULAR LOCATION</scope>
    <scope>SUBUNIT</scope>
</reference>
<comment type="function">
    <text evidence="3 4 5 6 10">Component of the small ribosomal subunit (PubMed:23873042, PubMed:25601755, PubMed:26245381, PubMed:27863242, PubMed:30517857). The ribosome is a large ribonucleoprotein complex responsible for the synthesis of proteins in the cell (PubMed:23873042, PubMed:25601755, PubMed:26245381, PubMed:27863242, PubMed:30517857).</text>
</comment>
<comment type="cofactor">
    <cofactor evidence="5">
        <name>Zn(2+)</name>
        <dbReference type="ChEBI" id="CHEBI:29105"/>
    </cofactor>
    <text evidence="5">Binds 1 zinc ion per subunit.</text>
</comment>
<comment type="subunit">
    <text evidence="3 4 5 6 7 8 9 10 11 12 13 14 15 16 17 18 19">Component of the 40S small ribosomal subunit.</text>
</comment>
<comment type="subcellular location">
    <subcellularLocation>
        <location evidence="1">Cytoplasm</location>
        <location evidence="1">Cytosol</location>
    </subcellularLocation>
    <subcellularLocation>
        <location evidence="3 4 5 6 7 8 9 10 11 12 13 14 15 16 17 18 19">Cytoplasm</location>
    </subcellularLocation>
    <subcellularLocation>
        <location evidence="2">Rough endoplasmic reticulum</location>
    </subcellularLocation>
    <text evidence="1 2">Detected on cytosolic polysomes (By similarity). Detected in ribosomes that are associated with the rough endoplasmic reticulum (By similarity).</text>
</comment>
<comment type="similarity">
    <text evidence="20">Belongs to the universal ribosomal protein uS14 family.</text>
</comment>
<protein>
    <recommendedName>
        <fullName>Small ribosomal subunit protein uS14</fullName>
    </recommendedName>
    <alternativeName>
        <fullName>40S ribosomal protein S29</fullName>
    </alternativeName>
</protein>
<gene>
    <name type="primary">RPS29</name>
</gene>
<proteinExistence type="evidence at protein level"/>
<evidence type="ECO:0000250" key="1">
    <source>
        <dbReference type="UniProtKB" id="P62273"/>
    </source>
</evidence>
<evidence type="ECO:0000250" key="2">
    <source>
        <dbReference type="UniProtKB" id="Q6QAP6"/>
    </source>
</evidence>
<evidence type="ECO:0000269" key="3">
    <source>
    </source>
</evidence>
<evidence type="ECO:0000269" key="4">
    <source>
    </source>
</evidence>
<evidence type="ECO:0000269" key="5">
    <source>
    </source>
</evidence>
<evidence type="ECO:0000269" key="6">
    <source>
    </source>
</evidence>
<evidence type="ECO:0000269" key="7">
    <source>
    </source>
</evidence>
<evidence type="ECO:0000269" key="8">
    <source>
    </source>
</evidence>
<evidence type="ECO:0000269" key="9">
    <source>
    </source>
</evidence>
<evidence type="ECO:0000269" key="10">
    <source>
    </source>
</evidence>
<evidence type="ECO:0000269" key="11">
    <source>
    </source>
</evidence>
<evidence type="ECO:0000269" key="12">
    <source>
    </source>
</evidence>
<evidence type="ECO:0000269" key="13">
    <source>
    </source>
</evidence>
<evidence type="ECO:0000269" key="14">
    <source>
    </source>
</evidence>
<evidence type="ECO:0000269" key="15">
    <source>
    </source>
</evidence>
<evidence type="ECO:0000269" key="16">
    <source>
    </source>
</evidence>
<evidence type="ECO:0000269" key="17">
    <source>
    </source>
</evidence>
<evidence type="ECO:0000269" key="18">
    <source>
    </source>
</evidence>
<evidence type="ECO:0000269" key="19">
    <source>
    </source>
</evidence>
<evidence type="ECO:0000305" key="20"/>
<evidence type="ECO:0007744" key="21">
    <source>
        <dbReference type="PDB" id="3JAG"/>
    </source>
</evidence>
<evidence type="ECO:0007744" key="22">
    <source>
        <dbReference type="PDB" id="3JAH"/>
    </source>
</evidence>
<evidence type="ECO:0007744" key="23">
    <source>
        <dbReference type="PDB" id="4D61"/>
    </source>
</evidence>
<evidence type="ECO:0007744" key="24">
    <source>
        <dbReference type="PDB" id="4KZX"/>
    </source>
</evidence>
<evidence type="ECO:0007744" key="25">
    <source>
        <dbReference type="PDB" id="4KZY"/>
    </source>
</evidence>
<evidence type="ECO:0007744" key="26">
    <source>
        <dbReference type="PDB" id="5LZU"/>
    </source>
</evidence>
<evidence type="ECO:0007744" key="27">
    <source>
        <dbReference type="PDB" id="6D90"/>
    </source>
</evidence>
<evidence type="ECO:0007744" key="28">
    <source>
        <dbReference type="PDB" id="6GZ3"/>
    </source>
</evidence>
<evidence type="ECO:0007744" key="29">
    <source>
        <dbReference type="PDB" id="6HCF"/>
    </source>
</evidence>
<evidence type="ECO:0007744" key="30">
    <source>
        <dbReference type="PDB" id="6HCJ"/>
    </source>
</evidence>
<evidence type="ECO:0007744" key="31">
    <source>
        <dbReference type="PDB" id="6MTB"/>
    </source>
</evidence>
<evidence type="ECO:0007744" key="32">
    <source>
        <dbReference type="PDB" id="6MTC"/>
    </source>
</evidence>
<evidence type="ECO:0007744" key="33">
    <source>
        <dbReference type="PDB" id="6P4G"/>
    </source>
</evidence>
<evidence type="ECO:0007744" key="34">
    <source>
        <dbReference type="PDB" id="6P4H"/>
    </source>
</evidence>
<evidence type="ECO:0007744" key="35">
    <source>
        <dbReference type="PDB" id="6R5Q"/>
    </source>
</evidence>
<evidence type="ECO:0007744" key="36">
    <source>
        <dbReference type="PDB" id="6R6G"/>
    </source>
</evidence>
<evidence type="ECO:0007744" key="37">
    <source>
        <dbReference type="PDB" id="6SGC"/>
    </source>
</evidence>
<evidence type="ECO:0007744" key="38">
    <source>
        <dbReference type="PDB" id="6W2S"/>
    </source>
</evidence>
<evidence type="ECO:0007744" key="39">
    <source>
        <dbReference type="PDB" id="6W2T"/>
    </source>
</evidence>
<evidence type="ECO:0007744" key="40">
    <source>
        <dbReference type="PDB" id="6ZVK"/>
    </source>
</evidence>
<evidence type="ECO:0007744" key="41">
    <source>
        <dbReference type="PDB" id="7A01"/>
    </source>
</evidence>
<evidence type="ECO:0007744" key="42">
    <source>
        <dbReference type="PDB" id="7OYD"/>
    </source>
</evidence>
<evidence type="ECO:0007744" key="43">
    <source>
        <dbReference type="PDB" id="7SYI"/>
    </source>
</evidence>
<evidence type="ECO:0007744" key="44">
    <source>
        <dbReference type="PDB" id="7SYJ"/>
    </source>
</evidence>
<evidence type="ECO:0007744" key="45">
    <source>
        <dbReference type="PDB" id="7UCJ"/>
    </source>
</evidence>
<evidence type="ECO:0007744" key="46">
    <source>
        <dbReference type="PDB" id="7UCK"/>
    </source>
</evidence>
<evidence type="ECO:0007744" key="47">
    <source>
        <dbReference type="PDB" id="7ZJW"/>
    </source>
</evidence>
<evidence type="ECO:0007744" key="48">
    <source>
        <dbReference type="PDB" id="7ZJX"/>
    </source>
</evidence>
<evidence type="ECO:0007829" key="49">
    <source>
        <dbReference type="PDB" id="6P4G"/>
    </source>
</evidence>
<evidence type="ECO:0007829" key="50">
    <source>
        <dbReference type="PDB" id="6YAL"/>
    </source>
</evidence>
<evidence type="ECO:0007829" key="51">
    <source>
        <dbReference type="PDB" id="8P03"/>
    </source>
</evidence>
<sequence length="56" mass="6677">MGHQQLYWSHPRKFGQGSRSCRVCSNRHGLIRKYGLNMCRQCFRQYAKDIGFIKLD</sequence>
<accession>G1U7M4</accession>